<proteinExistence type="inferred from homology"/>
<reference key="1">
    <citation type="journal article" date="2004" name="Proc. Natl. Acad. Sci. U.S.A.">
        <title>Complete genomes of two clinical Staphylococcus aureus strains: evidence for the rapid evolution of virulence and drug resistance.</title>
        <authorList>
            <person name="Holden M.T.G."/>
            <person name="Feil E.J."/>
            <person name="Lindsay J.A."/>
            <person name="Peacock S.J."/>
            <person name="Day N.P.J."/>
            <person name="Enright M.C."/>
            <person name="Foster T.J."/>
            <person name="Moore C.E."/>
            <person name="Hurst L."/>
            <person name="Atkin R."/>
            <person name="Barron A."/>
            <person name="Bason N."/>
            <person name="Bentley S.D."/>
            <person name="Chillingworth C."/>
            <person name="Chillingworth T."/>
            <person name="Churcher C."/>
            <person name="Clark L."/>
            <person name="Corton C."/>
            <person name="Cronin A."/>
            <person name="Doggett J."/>
            <person name="Dowd L."/>
            <person name="Feltwell T."/>
            <person name="Hance Z."/>
            <person name="Harris B."/>
            <person name="Hauser H."/>
            <person name="Holroyd S."/>
            <person name="Jagels K."/>
            <person name="James K.D."/>
            <person name="Lennard N."/>
            <person name="Line A."/>
            <person name="Mayes R."/>
            <person name="Moule S."/>
            <person name="Mungall K."/>
            <person name="Ormond D."/>
            <person name="Quail M.A."/>
            <person name="Rabbinowitsch E."/>
            <person name="Rutherford K.M."/>
            <person name="Sanders M."/>
            <person name="Sharp S."/>
            <person name="Simmonds M."/>
            <person name="Stevens K."/>
            <person name="Whitehead S."/>
            <person name="Barrell B.G."/>
            <person name="Spratt B.G."/>
            <person name="Parkhill J."/>
        </authorList>
    </citation>
    <scope>NUCLEOTIDE SEQUENCE [LARGE SCALE GENOMIC DNA]</scope>
    <source>
        <strain>MRSA252</strain>
    </source>
</reference>
<name>CLPX_STAAR</name>
<accession>Q6GG31</accession>
<comment type="function">
    <text evidence="1">ATP-dependent specificity component of the Clp protease. It directs the protease to specific substrates. Can perform chaperone functions in the absence of ClpP.</text>
</comment>
<comment type="subunit">
    <text evidence="1">Component of the ClpX-ClpP complex. Forms a hexameric ring that, in the presence of ATP, binds to fourteen ClpP subunits assembled into a disk-like structure with a central cavity, resembling the structure of eukaryotic proteasomes.</text>
</comment>
<comment type="similarity">
    <text evidence="1">Belongs to the ClpX chaperone family.</text>
</comment>
<gene>
    <name evidence="1" type="primary">clpX</name>
    <name type="ordered locus">SAR1754</name>
</gene>
<protein>
    <recommendedName>
        <fullName evidence="1">ATP-dependent Clp protease ATP-binding subunit ClpX</fullName>
    </recommendedName>
</protein>
<sequence>MFKFNEDEENLKCSFCGKDQDQVKKLVAGSGVYICNECIELCSEIVEEELAQNTSEAITELPTPKEIMDHLNEYVIGQEKAKKSLAVAVYNHYKRIQQLGPKEDDVELQKSNIALIGPTGSGKTLLAQTLAKTLNVPFAIADATSLTEAGYVGDDVENILLRLIQAADFDIDKAEKGIIYVDEIDKIARKSENTSITRDVSGEGVQQALLKILEGTTASVPPQGGRKHPNQEMIQIDTTNILFILGGAFDGIEEVIKRRLGEKVIGFSSNEADKYDEQALLAQIRPEDLQAYGLIPEFIGRVPIVANLETLDVTALKNILTQPKNALVKQYTKMLELDDVDLEFTEEALSAISEKAIERKTGARGLRSIIEESLIDIMFDVPSNENVTKVVITAQTINEETEPELYDAEGNLINNSKTSA</sequence>
<dbReference type="EMBL" id="BX571856">
    <property type="protein sequence ID" value="CAG40745.1"/>
    <property type="molecule type" value="Genomic_DNA"/>
</dbReference>
<dbReference type="RefSeq" id="WP_000472293.1">
    <property type="nucleotide sequence ID" value="NC_002952.2"/>
</dbReference>
<dbReference type="SMR" id="Q6GG31"/>
<dbReference type="KEGG" id="sar:SAR1754"/>
<dbReference type="HOGENOM" id="CLU_014218_8_2_9"/>
<dbReference type="Proteomes" id="UP000000596">
    <property type="component" value="Chromosome"/>
</dbReference>
<dbReference type="GO" id="GO:0009376">
    <property type="term" value="C:HslUV protease complex"/>
    <property type="evidence" value="ECO:0007669"/>
    <property type="project" value="TreeGrafter"/>
</dbReference>
<dbReference type="GO" id="GO:0005524">
    <property type="term" value="F:ATP binding"/>
    <property type="evidence" value="ECO:0007669"/>
    <property type="project" value="UniProtKB-UniRule"/>
</dbReference>
<dbReference type="GO" id="GO:0016887">
    <property type="term" value="F:ATP hydrolysis activity"/>
    <property type="evidence" value="ECO:0007669"/>
    <property type="project" value="InterPro"/>
</dbReference>
<dbReference type="GO" id="GO:0140662">
    <property type="term" value="F:ATP-dependent protein folding chaperone"/>
    <property type="evidence" value="ECO:0007669"/>
    <property type="project" value="InterPro"/>
</dbReference>
<dbReference type="GO" id="GO:0046983">
    <property type="term" value="F:protein dimerization activity"/>
    <property type="evidence" value="ECO:0007669"/>
    <property type="project" value="InterPro"/>
</dbReference>
<dbReference type="GO" id="GO:0051082">
    <property type="term" value="F:unfolded protein binding"/>
    <property type="evidence" value="ECO:0007669"/>
    <property type="project" value="UniProtKB-UniRule"/>
</dbReference>
<dbReference type="GO" id="GO:0008270">
    <property type="term" value="F:zinc ion binding"/>
    <property type="evidence" value="ECO:0007669"/>
    <property type="project" value="InterPro"/>
</dbReference>
<dbReference type="GO" id="GO:0051301">
    <property type="term" value="P:cell division"/>
    <property type="evidence" value="ECO:0007669"/>
    <property type="project" value="TreeGrafter"/>
</dbReference>
<dbReference type="GO" id="GO:0051603">
    <property type="term" value="P:proteolysis involved in protein catabolic process"/>
    <property type="evidence" value="ECO:0007669"/>
    <property type="project" value="TreeGrafter"/>
</dbReference>
<dbReference type="CDD" id="cd19497">
    <property type="entry name" value="RecA-like_ClpX"/>
    <property type="match status" value="1"/>
</dbReference>
<dbReference type="FunFam" id="1.10.8.60:FF:000002">
    <property type="entry name" value="ATP-dependent Clp protease ATP-binding subunit ClpX"/>
    <property type="match status" value="1"/>
</dbReference>
<dbReference type="FunFam" id="3.40.50.300:FF:000005">
    <property type="entry name" value="ATP-dependent Clp protease ATP-binding subunit ClpX"/>
    <property type="match status" value="1"/>
</dbReference>
<dbReference type="Gene3D" id="1.10.8.60">
    <property type="match status" value="1"/>
</dbReference>
<dbReference type="Gene3D" id="6.20.220.10">
    <property type="entry name" value="ClpX chaperone, C4-type zinc finger domain"/>
    <property type="match status" value="1"/>
</dbReference>
<dbReference type="Gene3D" id="3.40.50.300">
    <property type="entry name" value="P-loop containing nucleotide triphosphate hydrolases"/>
    <property type="match status" value="1"/>
</dbReference>
<dbReference type="HAMAP" id="MF_00175">
    <property type="entry name" value="ClpX"/>
    <property type="match status" value="1"/>
</dbReference>
<dbReference type="InterPro" id="IPR003593">
    <property type="entry name" value="AAA+_ATPase"/>
</dbReference>
<dbReference type="InterPro" id="IPR050052">
    <property type="entry name" value="ATP-dep_Clp_protease_ClpX"/>
</dbReference>
<dbReference type="InterPro" id="IPR003959">
    <property type="entry name" value="ATPase_AAA_core"/>
</dbReference>
<dbReference type="InterPro" id="IPR019489">
    <property type="entry name" value="Clp_ATPase_C"/>
</dbReference>
<dbReference type="InterPro" id="IPR004487">
    <property type="entry name" value="Clp_protease_ATP-bd_su_ClpX"/>
</dbReference>
<dbReference type="InterPro" id="IPR046425">
    <property type="entry name" value="ClpX_bact"/>
</dbReference>
<dbReference type="InterPro" id="IPR027417">
    <property type="entry name" value="P-loop_NTPase"/>
</dbReference>
<dbReference type="InterPro" id="IPR010603">
    <property type="entry name" value="Znf_CppX_C4"/>
</dbReference>
<dbReference type="InterPro" id="IPR038366">
    <property type="entry name" value="Znf_CppX_C4_sf"/>
</dbReference>
<dbReference type="NCBIfam" id="TIGR00382">
    <property type="entry name" value="clpX"/>
    <property type="match status" value="1"/>
</dbReference>
<dbReference type="NCBIfam" id="NF003745">
    <property type="entry name" value="PRK05342.1"/>
    <property type="match status" value="1"/>
</dbReference>
<dbReference type="PANTHER" id="PTHR48102:SF7">
    <property type="entry name" value="ATP-DEPENDENT CLP PROTEASE ATP-BINDING SUBUNIT CLPX-LIKE, MITOCHONDRIAL"/>
    <property type="match status" value="1"/>
</dbReference>
<dbReference type="PANTHER" id="PTHR48102">
    <property type="entry name" value="ATP-DEPENDENT CLP PROTEASE ATP-BINDING SUBUNIT CLPX-LIKE, MITOCHONDRIAL-RELATED"/>
    <property type="match status" value="1"/>
</dbReference>
<dbReference type="Pfam" id="PF07724">
    <property type="entry name" value="AAA_2"/>
    <property type="match status" value="1"/>
</dbReference>
<dbReference type="Pfam" id="PF10431">
    <property type="entry name" value="ClpB_D2-small"/>
    <property type="match status" value="1"/>
</dbReference>
<dbReference type="Pfam" id="PF06689">
    <property type="entry name" value="zf-C4_ClpX"/>
    <property type="match status" value="1"/>
</dbReference>
<dbReference type="SMART" id="SM00382">
    <property type="entry name" value="AAA"/>
    <property type="match status" value="1"/>
</dbReference>
<dbReference type="SMART" id="SM01086">
    <property type="entry name" value="ClpB_D2-small"/>
    <property type="match status" value="1"/>
</dbReference>
<dbReference type="SMART" id="SM00994">
    <property type="entry name" value="zf-C4_ClpX"/>
    <property type="match status" value="1"/>
</dbReference>
<dbReference type="SUPFAM" id="SSF57716">
    <property type="entry name" value="Glucocorticoid receptor-like (DNA-binding domain)"/>
    <property type="match status" value="1"/>
</dbReference>
<dbReference type="SUPFAM" id="SSF52540">
    <property type="entry name" value="P-loop containing nucleoside triphosphate hydrolases"/>
    <property type="match status" value="1"/>
</dbReference>
<dbReference type="PROSITE" id="PS51902">
    <property type="entry name" value="CLPX_ZB"/>
    <property type="match status" value="1"/>
</dbReference>
<feature type="chain" id="PRO_0000160422" description="ATP-dependent Clp protease ATP-binding subunit ClpX">
    <location>
        <begin position="1"/>
        <end position="420"/>
    </location>
</feature>
<feature type="domain" description="ClpX-type ZB" evidence="2">
    <location>
        <begin position="1"/>
        <end position="54"/>
    </location>
</feature>
<feature type="binding site" evidence="2">
    <location>
        <position position="13"/>
    </location>
    <ligand>
        <name>Zn(2+)</name>
        <dbReference type="ChEBI" id="CHEBI:29105"/>
    </ligand>
</feature>
<feature type="binding site" evidence="2">
    <location>
        <position position="16"/>
    </location>
    <ligand>
        <name>Zn(2+)</name>
        <dbReference type="ChEBI" id="CHEBI:29105"/>
    </ligand>
</feature>
<feature type="binding site" evidence="2">
    <location>
        <position position="35"/>
    </location>
    <ligand>
        <name>Zn(2+)</name>
        <dbReference type="ChEBI" id="CHEBI:29105"/>
    </ligand>
</feature>
<feature type="binding site" evidence="2">
    <location>
        <position position="38"/>
    </location>
    <ligand>
        <name>Zn(2+)</name>
        <dbReference type="ChEBI" id="CHEBI:29105"/>
    </ligand>
</feature>
<feature type="binding site" evidence="1">
    <location>
        <begin position="118"/>
        <end position="125"/>
    </location>
    <ligand>
        <name>ATP</name>
        <dbReference type="ChEBI" id="CHEBI:30616"/>
    </ligand>
</feature>
<keyword id="KW-0067">ATP-binding</keyword>
<keyword id="KW-0143">Chaperone</keyword>
<keyword id="KW-0479">Metal-binding</keyword>
<keyword id="KW-0547">Nucleotide-binding</keyword>
<keyword id="KW-0862">Zinc</keyword>
<evidence type="ECO:0000255" key="1">
    <source>
        <dbReference type="HAMAP-Rule" id="MF_00175"/>
    </source>
</evidence>
<evidence type="ECO:0000255" key="2">
    <source>
        <dbReference type="PROSITE-ProRule" id="PRU01250"/>
    </source>
</evidence>
<organism>
    <name type="scientific">Staphylococcus aureus (strain MRSA252)</name>
    <dbReference type="NCBI Taxonomy" id="282458"/>
    <lineage>
        <taxon>Bacteria</taxon>
        <taxon>Bacillati</taxon>
        <taxon>Bacillota</taxon>
        <taxon>Bacilli</taxon>
        <taxon>Bacillales</taxon>
        <taxon>Staphylococcaceae</taxon>
        <taxon>Staphylococcus</taxon>
    </lineage>
</organism>